<keyword id="KW-0028">Amino-acid biosynthesis</keyword>
<keyword id="KW-0456">Lyase</keyword>
<keyword id="KW-0479">Metal-binding</keyword>
<keyword id="KW-0486">Methionine biosynthesis</keyword>
<keyword id="KW-0862">Zinc</keyword>
<feature type="chain" id="PRO_1000187342" description="Methylthioribulose-1-phosphate dehydratase">
    <location>
        <begin position="1"/>
        <end position="212"/>
    </location>
</feature>
<feature type="binding site" evidence="1">
    <location>
        <position position="97"/>
    </location>
    <ligand>
        <name>Zn(2+)</name>
        <dbReference type="ChEBI" id="CHEBI:29105"/>
    </ligand>
</feature>
<feature type="binding site" evidence="1">
    <location>
        <position position="99"/>
    </location>
    <ligand>
        <name>Zn(2+)</name>
        <dbReference type="ChEBI" id="CHEBI:29105"/>
    </ligand>
</feature>
<gene>
    <name evidence="1" type="primary">mtnB</name>
    <name type="ordered locus">BCG9842_B1091</name>
</gene>
<proteinExistence type="inferred from homology"/>
<reference key="1">
    <citation type="submission" date="2008-10" db="EMBL/GenBank/DDBJ databases">
        <title>Genome sequence of Bacillus cereus G9842.</title>
        <authorList>
            <person name="Dodson R.J."/>
            <person name="Durkin A.S."/>
            <person name="Rosovitz M.J."/>
            <person name="Rasko D.A."/>
            <person name="Hoffmaster A."/>
            <person name="Ravel J."/>
            <person name="Sutton G."/>
        </authorList>
    </citation>
    <scope>NUCLEOTIDE SEQUENCE [LARGE SCALE GENOMIC DNA]</scope>
    <source>
        <strain>G9842</strain>
    </source>
</reference>
<evidence type="ECO:0000255" key="1">
    <source>
        <dbReference type="HAMAP-Rule" id="MF_01677"/>
    </source>
</evidence>
<comment type="function">
    <text evidence="1">Catalyzes the dehydration of methylthioribulose-1-phosphate (MTRu-1-P) into 2,3-diketo-5-methylthiopentyl-1-phosphate (DK-MTP-1-P).</text>
</comment>
<comment type="catalytic activity">
    <reaction evidence="1">
        <text>5-(methylsulfanyl)-D-ribulose 1-phosphate = 5-methylsulfanyl-2,3-dioxopentyl phosphate + H2O</text>
        <dbReference type="Rhea" id="RHEA:15549"/>
        <dbReference type="ChEBI" id="CHEBI:15377"/>
        <dbReference type="ChEBI" id="CHEBI:58548"/>
        <dbReference type="ChEBI" id="CHEBI:58828"/>
        <dbReference type="EC" id="4.2.1.109"/>
    </reaction>
</comment>
<comment type="cofactor">
    <cofactor evidence="1">
        <name>Zn(2+)</name>
        <dbReference type="ChEBI" id="CHEBI:29105"/>
    </cofactor>
    <text evidence="1">Binds 1 zinc ion per subunit.</text>
</comment>
<comment type="pathway">
    <text evidence="1">Amino-acid biosynthesis; L-methionine biosynthesis via salvage pathway; L-methionine from S-methyl-5-thio-alpha-D-ribose 1-phosphate: step 2/6.</text>
</comment>
<comment type="subunit">
    <text evidence="1">Homotetramer.</text>
</comment>
<comment type="similarity">
    <text evidence="1">Belongs to the aldolase class II family. MtnB subfamily.</text>
</comment>
<protein>
    <recommendedName>
        <fullName evidence="1">Methylthioribulose-1-phosphate dehydratase</fullName>
        <shortName evidence="1">MTRu-1-P dehydratase</shortName>
        <ecNumber evidence="1">4.2.1.109</ecNumber>
    </recommendedName>
</protein>
<name>MTNB_BACC2</name>
<organism>
    <name type="scientific">Bacillus cereus (strain G9842)</name>
    <dbReference type="NCBI Taxonomy" id="405531"/>
    <lineage>
        <taxon>Bacteria</taxon>
        <taxon>Bacillati</taxon>
        <taxon>Bacillota</taxon>
        <taxon>Bacilli</taxon>
        <taxon>Bacillales</taxon>
        <taxon>Bacillaceae</taxon>
        <taxon>Bacillus</taxon>
        <taxon>Bacillus cereus group</taxon>
    </lineage>
</organism>
<sequence length="212" mass="23897">MKQLFRQWYDLSEIKKELTTRNWFPATSGNISIKVSHEPLTFLITASGKDKTKTTPDDFLLVDHVGVPVLETELRPSAETILHTHIYNNTNAGCVLHVHTTDNNVITNLYSDAVTLQNQEIIKALDIWEEGATIHIPIIENHAHIPTLGENFRKHIKGDSGAVLIRNHGITVWGRDSFDAKKRLEAYEFLFQFHIKLLSIQGGVSNGANSYS</sequence>
<dbReference type="EC" id="4.2.1.109" evidence="1"/>
<dbReference type="EMBL" id="CP001186">
    <property type="protein sequence ID" value="ACK93197.1"/>
    <property type="molecule type" value="Genomic_DNA"/>
</dbReference>
<dbReference type="RefSeq" id="WP_000811340.1">
    <property type="nucleotide sequence ID" value="NC_011772.1"/>
</dbReference>
<dbReference type="SMR" id="B7IWF0"/>
<dbReference type="KEGG" id="bcg:BCG9842_B1091"/>
<dbReference type="HOGENOM" id="CLU_006033_4_1_9"/>
<dbReference type="UniPathway" id="UPA00904">
    <property type="reaction ID" value="UER00875"/>
</dbReference>
<dbReference type="Proteomes" id="UP000006744">
    <property type="component" value="Chromosome"/>
</dbReference>
<dbReference type="GO" id="GO:0005737">
    <property type="term" value="C:cytoplasm"/>
    <property type="evidence" value="ECO:0007669"/>
    <property type="project" value="InterPro"/>
</dbReference>
<dbReference type="GO" id="GO:0046570">
    <property type="term" value="F:methylthioribulose 1-phosphate dehydratase activity"/>
    <property type="evidence" value="ECO:0007669"/>
    <property type="project" value="UniProtKB-UniRule"/>
</dbReference>
<dbReference type="GO" id="GO:0008270">
    <property type="term" value="F:zinc ion binding"/>
    <property type="evidence" value="ECO:0007669"/>
    <property type="project" value="UniProtKB-UniRule"/>
</dbReference>
<dbReference type="GO" id="GO:0019509">
    <property type="term" value="P:L-methionine salvage from methylthioadenosine"/>
    <property type="evidence" value="ECO:0007669"/>
    <property type="project" value="UniProtKB-UniRule"/>
</dbReference>
<dbReference type="FunFam" id="3.40.225.10:FF:000007">
    <property type="entry name" value="Methylthioribulose-1-phosphate dehydratase"/>
    <property type="match status" value="1"/>
</dbReference>
<dbReference type="Gene3D" id="3.40.225.10">
    <property type="entry name" value="Class II aldolase/adducin N-terminal domain"/>
    <property type="match status" value="1"/>
</dbReference>
<dbReference type="HAMAP" id="MF_01677">
    <property type="entry name" value="Salvage_MtnB"/>
    <property type="match status" value="1"/>
</dbReference>
<dbReference type="InterPro" id="IPR001303">
    <property type="entry name" value="Aldolase_II/adducin_N"/>
</dbReference>
<dbReference type="InterPro" id="IPR036409">
    <property type="entry name" value="Aldolase_II/adducin_N_sf"/>
</dbReference>
<dbReference type="InterPro" id="IPR017714">
    <property type="entry name" value="MethylthioRu-1-P_deHdtase_MtnB"/>
</dbReference>
<dbReference type="NCBIfam" id="NF005244">
    <property type="entry name" value="PRK06754.1"/>
    <property type="match status" value="1"/>
</dbReference>
<dbReference type="NCBIfam" id="TIGR03328">
    <property type="entry name" value="salvage_mtnB"/>
    <property type="match status" value="1"/>
</dbReference>
<dbReference type="PANTHER" id="PTHR10640">
    <property type="entry name" value="METHYLTHIORIBULOSE-1-PHOSPHATE DEHYDRATASE"/>
    <property type="match status" value="1"/>
</dbReference>
<dbReference type="PANTHER" id="PTHR10640:SF7">
    <property type="entry name" value="METHYLTHIORIBULOSE-1-PHOSPHATE DEHYDRATASE"/>
    <property type="match status" value="1"/>
</dbReference>
<dbReference type="Pfam" id="PF00596">
    <property type="entry name" value="Aldolase_II"/>
    <property type="match status" value="1"/>
</dbReference>
<dbReference type="SMART" id="SM01007">
    <property type="entry name" value="Aldolase_II"/>
    <property type="match status" value="1"/>
</dbReference>
<dbReference type="SUPFAM" id="SSF53639">
    <property type="entry name" value="AraD/HMP-PK domain-like"/>
    <property type="match status" value="1"/>
</dbReference>
<accession>B7IWF0</accession>